<protein>
    <recommendedName>
        <fullName evidence="1">Triosephosphate isomerase</fullName>
        <shortName evidence="1">TIM</shortName>
        <shortName evidence="1">TPI</shortName>
        <ecNumber evidence="1">5.3.1.1</ecNumber>
    </recommendedName>
    <alternativeName>
        <fullName evidence="1">Triose-phosphate isomerase</fullName>
    </alternativeName>
</protein>
<organism>
    <name type="scientific">Shigella sonnei (strain Ss046)</name>
    <dbReference type="NCBI Taxonomy" id="300269"/>
    <lineage>
        <taxon>Bacteria</taxon>
        <taxon>Pseudomonadati</taxon>
        <taxon>Pseudomonadota</taxon>
        <taxon>Gammaproteobacteria</taxon>
        <taxon>Enterobacterales</taxon>
        <taxon>Enterobacteriaceae</taxon>
        <taxon>Shigella</taxon>
    </lineage>
</organism>
<proteinExistence type="inferred from homology"/>
<feature type="chain" id="PRO_0000307563" description="Triosephosphate isomerase">
    <location>
        <begin position="1"/>
        <end position="255"/>
    </location>
</feature>
<feature type="active site" description="Electrophile" evidence="1">
    <location>
        <position position="95"/>
    </location>
</feature>
<feature type="active site" description="Proton acceptor" evidence="1">
    <location>
        <position position="167"/>
    </location>
</feature>
<feature type="binding site" evidence="1">
    <location>
        <begin position="9"/>
        <end position="11"/>
    </location>
    <ligand>
        <name>substrate</name>
    </ligand>
</feature>
<feature type="binding site" evidence="1">
    <location>
        <position position="173"/>
    </location>
    <ligand>
        <name>substrate</name>
    </ligand>
</feature>
<feature type="binding site" evidence="1">
    <location>
        <position position="212"/>
    </location>
    <ligand>
        <name>substrate</name>
    </ligand>
</feature>
<feature type="binding site" evidence="1">
    <location>
        <begin position="233"/>
        <end position="234"/>
    </location>
    <ligand>
        <name>substrate</name>
    </ligand>
</feature>
<keyword id="KW-0963">Cytoplasm</keyword>
<keyword id="KW-0312">Gluconeogenesis</keyword>
<keyword id="KW-0324">Glycolysis</keyword>
<keyword id="KW-0413">Isomerase</keyword>
<keyword id="KW-1185">Reference proteome</keyword>
<reference key="1">
    <citation type="journal article" date="2005" name="Nucleic Acids Res.">
        <title>Genome dynamics and diversity of Shigella species, the etiologic agents of bacillary dysentery.</title>
        <authorList>
            <person name="Yang F."/>
            <person name="Yang J."/>
            <person name="Zhang X."/>
            <person name="Chen L."/>
            <person name="Jiang Y."/>
            <person name="Yan Y."/>
            <person name="Tang X."/>
            <person name="Wang J."/>
            <person name="Xiong Z."/>
            <person name="Dong J."/>
            <person name="Xue Y."/>
            <person name="Zhu Y."/>
            <person name="Xu X."/>
            <person name="Sun L."/>
            <person name="Chen S."/>
            <person name="Nie H."/>
            <person name="Peng J."/>
            <person name="Xu J."/>
            <person name="Wang Y."/>
            <person name="Yuan Z."/>
            <person name="Wen Y."/>
            <person name="Yao Z."/>
            <person name="Shen Y."/>
            <person name="Qiang B."/>
            <person name="Hou Y."/>
            <person name="Yu J."/>
            <person name="Jin Q."/>
        </authorList>
    </citation>
    <scope>NUCLEOTIDE SEQUENCE [LARGE SCALE GENOMIC DNA]</scope>
    <source>
        <strain>Ss046</strain>
    </source>
</reference>
<name>TPIS_SHISS</name>
<sequence length="255" mass="26972">MRHPLVMGNWKLNGSRHMVHELVSNLRKELAGVAGCAVAIAPPEMYIDMAKREAEGSHIMLGAQNVDLNLSGAFTGETSAAMLKDIGAQYIIIGHSERRTYHKESDELIAKKFAVLKEQGLTPVLCIGETEAENEAGKTEEVCARQIDAVLKTQGAAAFEGAVIAYEPVWAIGTGKSATPAQAQAVHKFIRDHIAKVDANIAEQVIIQYGGSVNASNAAELFAQPDIDGALVGGASLKADAFAVIVKAAEAAKQA</sequence>
<evidence type="ECO:0000255" key="1">
    <source>
        <dbReference type="HAMAP-Rule" id="MF_00147"/>
    </source>
</evidence>
<accession>Q3YV59</accession>
<comment type="function">
    <text evidence="1">Involved in the gluconeogenesis. Catalyzes stereospecifically the conversion of dihydroxyacetone phosphate (DHAP) to D-glyceraldehyde-3-phosphate (G3P).</text>
</comment>
<comment type="catalytic activity">
    <reaction evidence="1">
        <text>D-glyceraldehyde 3-phosphate = dihydroxyacetone phosphate</text>
        <dbReference type="Rhea" id="RHEA:18585"/>
        <dbReference type="ChEBI" id="CHEBI:57642"/>
        <dbReference type="ChEBI" id="CHEBI:59776"/>
        <dbReference type="EC" id="5.3.1.1"/>
    </reaction>
</comment>
<comment type="pathway">
    <text evidence="1">Carbohydrate biosynthesis; gluconeogenesis.</text>
</comment>
<comment type="pathway">
    <text evidence="1">Carbohydrate degradation; glycolysis; D-glyceraldehyde 3-phosphate from glycerone phosphate: step 1/1.</text>
</comment>
<comment type="subunit">
    <text evidence="1">Homodimer.</text>
</comment>
<comment type="subcellular location">
    <subcellularLocation>
        <location evidence="1">Cytoplasm</location>
    </subcellularLocation>
</comment>
<comment type="similarity">
    <text evidence="1">Belongs to the triosephosphate isomerase family.</text>
</comment>
<dbReference type="EC" id="5.3.1.1" evidence="1"/>
<dbReference type="EMBL" id="CP000038">
    <property type="protein sequence ID" value="AAZ90603.1"/>
    <property type="molecule type" value="Genomic_DNA"/>
</dbReference>
<dbReference type="RefSeq" id="WP_001216325.1">
    <property type="nucleotide sequence ID" value="NC_007384.1"/>
</dbReference>
<dbReference type="SMR" id="Q3YV59"/>
<dbReference type="GeneID" id="93777979"/>
<dbReference type="KEGG" id="ssn:SSON_4088"/>
<dbReference type="HOGENOM" id="CLU_024251_2_1_6"/>
<dbReference type="UniPathway" id="UPA00109">
    <property type="reaction ID" value="UER00189"/>
</dbReference>
<dbReference type="UniPathway" id="UPA00138"/>
<dbReference type="Proteomes" id="UP000002529">
    <property type="component" value="Chromosome"/>
</dbReference>
<dbReference type="GO" id="GO:0005829">
    <property type="term" value="C:cytosol"/>
    <property type="evidence" value="ECO:0007669"/>
    <property type="project" value="TreeGrafter"/>
</dbReference>
<dbReference type="GO" id="GO:0004807">
    <property type="term" value="F:triose-phosphate isomerase activity"/>
    <property type="evidence" value="ECO:0007669"/>
    <property type="project" value="UniProtKB-UniRule"/>
</dbReference>
<dbReference type="GO" id="GO:0006094">
    <property type="term" value="P:gluconeogenesis"/>
    <property type="evidence" value="ECO:0007669"/>
    <property type="project" value="UniProtKB-UniRule"/>
</dbReference>
<dbReference type="GO" id="GO:0046166">
    <property type="term" value="P:glyceraldehyde-3-phosphate biosynthetic process"/>
    <property type="evidence" value="ECO:0007669"/>
    <property type="project" value="TreeGrafter"/>
</dbReference>
<dbReference type="GO" id="GO:0019563">
    <property type="term" value="P:glycerol catabolic process"/>
    <property type="evidence" value="ECO:0007669"/>
    <property type="project" value="TreeGrafter"/>
</dbReference>
<dbReference type="GO" id="GO:0006096">
    <property type="term" value="P:glycolytic process"/>
    <property type="evidence" value="ECO:0007669"/>
    <property type="project" value="UniProtKB-UniRule"/>
</dbReference>
<dbReference type="CDD" id="cd00311">
    <property type="entry name" value="TIM"/>
    <property type="match status" value="1"/>
</dbReference>
<dbReference type="FunFam" id="3.20.20.70:FF:000020">
    <property type="entry name" value="Triosephosphate isomerase"/>
    <property type="match status" value="1"/>
</dbReference>
<dbReference type="Gene3D" id="3.20.20.70">
    <property type="entry name" value="Aldolase class I"/>
    <property type="match status" value="1"/>
</dbReference>
<dbReference type="HAMAP" id="MF_00147_B">
    <property type="entry name" value="TIM_B"/>
    <property type="match status" value="1"/>
</dbReference>
<dbReference type="InterPro" id="IPR013785">
    <property type="entry name" value="Aldolase_TIM"/>
</dbReference>
<dbReference type="InterPro" id="IPR035990">
    <property type="entry name" value="TIM_sf"/>
</dbReference>
<dbReference type="InterPro" id="IPR022896">
    <property type="entry name" value="TrioseP_Isoase_bac/euk"/>
</dbReference>
<dbReference type="InterPro" id="IPR000652">
    <property type="entry name" value="Triosephosphate_isomerase"/>
</dbReference>
<dbReference type="InterPro" id="IPR020861">
    <property type="entry name" value="Triosephosphate_isomerase_AS"/>
</dbReference>
<dbReference type="NCBIfam" id="TIGR00419">
    <property type="entry name" value="tim"/>
    <property type="match status" value="1"/>
</dbReference>
<dbReference type="PANTHER" id="PTHR21139">
    <property type="entry name" value="TRIOSEPHOSPHATE ISOMERASE"/>
    <property type="match status" value="1"/>
</dbReference>
<dbReference type="PANTHER" id="PTHR21139:SF42">
    <property type="entry name" value="TRIOSEPHOSPHATE ISOMERASE"/>
    <property type="match status" value="1"/>
</dbReference>
<dbReference type="Pfam" id="PF00121">
    <property type="entry name" value="TIM"/>
    <property type="match status" value="1"/>
</dbReference>
<dbReference type="SUPFAM" id="SSF51351">
    <property type="entry name" value="Triosephosphate isomerase (TIM)"/>
    <property type="match status" value="1"/>
</dbReference>
<dbReference type="PROSITE" id="PS00171">
    <property type="entry name" value="TIM_1"/>
    <property type="match status" value="1"/>
</dbReference>
<dbReference type="PROSITE" id="PS51440">
    <property type="entry name" value="TIM_2"/>
    <property type="match status" value="1"/>
</dbReference>
<gene>
    <name evidence="1" type="primary">tpiA</name>
    <name type="ordered locus">SSON_4088</name>
</gene>